<comment type="function">
    <text evidence="1">Involved in protein export. Acts as a chaperone by maintaining the newly synthesized protein in an open conformation. Functions as a peptidyl-prolyl cis-trans isomerase.</text>
</comment>
<comment type="catalytic activity">
    <reaction evidence="1">
        <text>[protein]-peptidylproline (omega=180) = [protein]-peptidylproline (omega=0)</text>
        <dbReference type="Rhea" id="RHEA:16237"/>
        <dbReference type="Rhea" id="RHEA-COMP:10747"/>
        <dbReference type="Rhea" id="RHEA-COMP:10748"/>
        <dbReference type="ChEBI" id="CHEBI:83833"/>
        <dbReference type="ChEBI" id="CHEBI:83834"/>
        <dbReference type="EC" id="5.2.1.8"/>
    </reaction>
</comment>
<comment type="subcellular location">
    <subcellularLocation>
        <location>Cytoplasm</location>
    </subcellularLocation>
    <text evidence="1">About half TF is bound to the ribosome near the polypeptide exit tunnel while the other half is free in the cytoplasm.</text>
</comment>
<comment type="domain">
    <text evidence="1">Consists of 3 domains; the N-terminus binds the ribosome, the middle domain has PPIase activity, while the C-terminus has intrinsic chaperone activity on its own.</text>
</comment>
<comment type="similarity">
    <text evidence="1">Belongs to the FKBP-type PPIase family. Tig subfamily.</text>
</comment>
<protein>
    <recommendedName>
        <fullName evidence="1">Trigger factor</fullName>
        <shortName evidence="1">TF</shortName>
        <ecNumber evidence="1">5.2.1.8</ecNumber>
    </recommendedName>
    <alternativeName>
        <fullName evidence="1">PPIase</fullName>
    </alternativeName>
</protein>
<organism>
    <name type="scientific">Mycolicibacterium paratuberculosis (strain ATCC BAA-968 / K-10)</name>
    <name type="common">Mycobacterium paratuberculosis</name>
    <dbReference type="NCBI Taxonomy" id="262316"/>
    <lineage>
        <taxon>Bacteria</taxon>
        <taxon>Bacillati</taxon>
        <taxon>Actinomycetota</taxon>
        <taxon>Actinomycetes</taxon>
        <taxon>Mycobacteriales</taxon>
        <taxon>Mycobacteriaceae</taxon>
        <taxon>Mycobacterium</taxon>
        <taxon>Mycobacterium avium complex (MAC)</taxon>
    </lineage>
</organism>
<feature type="chain" id="PRO_0000179386" description="Trigger factor">
    <location>
        <begin position="1"/>
        <end position="464"/>
    </location>
</feature>
<feature type="domain" description="PPIase FKBP-type" evidence="1">
    <location>
        <begin position="162"/>
        <end position="243"/>
    </location>
</feature>
<feature type="region of interest" description="Disordered" evidence="2">
    <location>
        <begin position="431"/>
        <end position="464"/>
    </location>
</feature>
<feature type="compositionally biased region" description="Acidic residues" evidence="2">
    <location>
        <begin position="446"/>
        <end position="455"/>
    </location>
</feature>
<name>TIG_MYCPA</name>
<dbReference type="EC" id="5.2.1.8" evidence="1"/>
<dbReference type="EMBL" id="AE016958">
    <property type="protein sequence ID" value="AAS04599.1"/>
    <property type="molecule type" value="Genomic_DNA"/>
</dbReference>
<dbReference type="RefSeq" id="WP_003875847.1">
    <property type="nucleotide sequence ID" value="NZ_CP106873.1"/>
</dbReference>
<dbReference type="SMR" id="Q73XM7"/>
<dbReference type="STRING" id="262316.MAP_2282c"/>
<dbReference type="GeneID" id="75269488"/>
<dbReference type="KEGG" id="mpa:MAP_2282c"/>
<dbReference type="eggNOG" id="COG0544">
    <property type="taxonomic scope" value="Bacteria"/>
</dbReference>
<dbReference type="HOGENOM" id="CLU_033058_3_0_11"/>
<dbReference type="Proteomes" id="UP000000580">
    <property type="component" value="Chromosome"/>
</dbReference>
<dbReference type="GO" id="GO:0005737">
    <property type="term" value="C:cytoplasm"/>
    <property type="evidence" value="ECO:0007669"/>
    <property type="project" value="UniProtKB-SubCell"/>
</dbReference>
<dbReference type="GO" id="GO:0003755">
    <property type="term" value="F:peptidyl-prolyl cis-trans isomerase activity"/>
    <property type="evidence" value="ECO:0007669"/>
    <property type="project" value="UniProtKB-UniRule"/>
</dbReference>
<dbReference type="GO" id="GO:0044183">
    <property type="term" value="F:protein folding chaperone"/>
    <property type="evidence" value="ECO:0007669"/>
    <property type="project" value="TreeGrafter"/>
</dbReference>
<dbReference type="GO" id="GO:0043022">
    <property type="term" value="F:ribosome binding"/>
    <property type="evidence" value="ECO:0007669"/>
    <property type="project" value="TreeGrafter"/>
</dbReference>
<dbReference type="GO" id="GO:0051083">
    <property type="term" value="P:'de novo' cotranslational protein folding"/>
    <property type="evidence" value="ECO:0007669"/>
    <property type="project" value="TreeGrafter"/>
</dbReference>
<dbReference type="GO" id="GO:0051301">
    <property type="term" value="P:cell division"/>
    <property type="evidence" value="ECO:0007669"/>
    <property type="project" value="UniProtKB-KW"/>
</dbReference>
<dbReference type="GO" id="GO:0061077">
    <property type="term" value="P:chaperone-mediated protein folding"/>
    <property type="evidence" value="ECO:0007669"/>
    <property type="project" value="TreeGrafter"/>
</dbReference>
<dbReference type="GO" id="GO:0015031">
    <property type="term" value="P:protein transport"/>
    <property type="evidence" value="ECO:0007669"/>
    <property type="project" value="UniProtKB-UniRule"/>
</dbReference>
<dbReference type="GO" id="GO:0043335">
    <property type="term" value="P:protein unfolding"/>
    <property type="evidence" value="ECO:0007669"/>
    <property type="project" value="TreeGrafter"/>
</dbReference>
<dbReference type="Gene3D" id="3.10.50.40">
    <property type="match status" value="1"/>
</dbReference>
<dbReference type="Gene3D" id="3.30.70.1050">
    <property type="entry name" value="Trigger factor ribosome-binding domain"/>
    <property type="match status" value="1"/>
</dbReference>
<dbReference type="Gene3D" id="1.10.3120.10">
    <property type="entry name" value="Trigger factor, C-terminal domain"/>
    <property type="match status" value="1"/>
</dbReference>
<dbReference type="HAMAP" id="MF_00303">
    <property type="entry name" value="Trigger_factor_Tig"/>
    <property type="match status" value="1"/>
</dbReference>
<dbReference type="InterPro" id="IPR046357">
    <property type="entry name" value="PPIase_dom_sf"/>
</dbReference>
<dbReference type="InterPro" id="IPR001179">
    <property type="entry name" value="PPIase_FKBP_dom"/>
</dbReference>
<dbReference type="InterPro" id="IPR005215">
    <property type="entry name" value="Trig_fac"/>
</dbReference>
<dbReference type="InterPro" id="IPR008880">
    <property type="entry name" value="Trigger_fac_C"/>
</dbReference>
<dbReference type="InterPro" id="IPR037041">
    <property type="entry name" value="Trigger_fac_C_sf"/>
</dbReference>
<dbReference type="InterPro" id="IPR008881">
    <property type="entry name" value="Trigger_fac_ribosome-bd_bac"/>
</dbReference>
<dbReference type="InterPro" id="IPR036611">
    <property type="entry name" value="Trigger_fac_ribosome-bd_sf"/>
</dbReference>
<dbReference type="InterPro" id="IPR027304">
    <property type="entry name" value="Trigger_fact/SurA_dom_sf"/>
</dbReference>
<dbReference type="NCBIfam" id="TIGR00115">
    <property type="entry name" value="tig"/>
    <property type="match status" value="1"/>
</dbReference>
<dbReference type="PANTHER" id="PTHR30560">
    <property type="entry name" value="TRIGGER FACTOR CHAPERONE AND PEPTIDYL-PROLYL CIS/TRANS ISOMERASE"/>
    <property type="match status" value="1"/>
</dbReference>
<dbReference type="PANTHER" id="PTHR30560:SF3">
    <property type="entry name" value="TRIGGER FACTOR-LIKE PROTEIN TIG, CHLOROPLASTIC"/>
    <property type="match status" value="1"/>
</dbReference>
<dbReference type="Pfam" id="PF00254">
    <property type="entry name" value="FKBP_C"/>
    <property type="match status" value="1"/>
</dbReference>
<dbReference type="Pfam" id="PF05698">
    <property type="entry name" value="Trigger_C"/>
    <property type="match status" value="1"/>
</dbReference>
<dbReference type="Pfam" id="PF05697">
    <property type="entry name" value="Trigger_N"/>
    <property type="match status" value="1"/>
</dbReference>
<dbReference type="PIRSF" id="PIRSF003095">
    <property type="entry name" value="Trigger_factor"/>
    <property type="match status" value="1"/>
</dbReference>
<dbReference type="SUPFAM" id="SSF54534">
    <property type="entry name" value="FKBP-like"/>
    <property type="match status" value="1"/>
</dbReference>
<dbReference type="SUPFAM" id="SSF109998">
    <property type="entry name" value="Triger factor/SurA peptide-binding domain-like"/>
    <property type="match status" value="1"/>
</dbReference>
<dbReference type="SUPFAM" id="SSF102735">
    <property type="entry name" value="Trigger factor ribosome-binding domain"/>
    <property type="match status" value="1"/>
</dbReference>
<dbReference type="PROSITE" id="PS50059">
    <property type="entry name" value="FKBP_PPIASE"/>
    <property type="match status" value="1"/>
</dbReference>
<accession>Q73XM7</accession>
<sequence>MKSTVEQLSPTRVRINVEVPFAELEPDFQRAYKELAKQVRLPGFRPGKAPAKLLEARFGREAMLDQVVTEALPARYGQAVAESEVHPLGQPEIEVTKKEYGQELAFTAEVDVRPELNLPDPGALKISVDPIEVTDEDVDAELQSLRARFGTLTGVERPVAEGDFVSIDLSATIDGQEVPGATAQGLSHEVGSGRLIEGLDEALIGMSVDESREFTTKLVSGEHAGQDAQVTVTVKSVKERELPEPDDEFAQLASEFDTIDELRANLREQVGRVKRAQQAERIRDAAIDTLLEQVDIPLPEAIVKAQVDSALHGALHSLNHDESKLEEVLAQQGKSREEFENETRTAAETDVKKQLLLDALADKLQVQVGQEDLTERLVATSRQYGIEPQQLLAYLQENNQLPAMFADVRRALAIAEVIRAATVTDTAGNTIDTSEFFGKRPSGDGAADEDADQADESTTADAGE</sequence>
<evidence type="ECO:0000255" key="1">
    <source>
        <dbReference type="HAMAP-Rule" id="MF_00303"/>
    </source>
</evidence>
<evidence type="ECO:0000256" key="2">
    <source>
        <dbReference type="SAM" id="MobiDB-lite"/>
    </source>
</evidence>
<reference key="1">
    <citation type="journal article" date="2005" name="Proc. Natl. Acad. Sci. U.S.A.">
        <title>The complete genome sequence of Mycobacterium avium subspecies paratuberculosis.</title>
        <authorList>
            <person name="Li L."/>
            <person name="Bannantine J.P."/>
            <person name="Zhang Q."/>
            <person name="Amonsin A."/>
            <person name="May B.J."/>
            <person name="Alt D."/>
            <person name="Banerji N."/>
            <person name="Kanjilal S."/>
            <person name="Kapur V."/>
        </authorList>
    </citation>
    <scope>NUCLEOTIDE SEQUENCE [LARGE SCALE GENOMIC DNA]</scope>
    <source>
        <strain>ATCC BAA-968 / K-10</strain>
    </source>
</reference>
<proteinExistence type="inferred from homology"/>
<gene>
    <name evidence="1" type="primary">tig</name>
    <name type="ordered locus">MAP_2282c</name>
</gene>
<keyword id="KW-0131">Cell cycle</keyword>
<keyword id="KW-0132">Cell division</keyword>
<keyword id="KW-0143">Chaperone</keyword>
<keyword id="KW-0963">Cytoplasm</keyword>
<keyword id="KW-0413">Isomerase</keyword>
<keyword id="KW-1185">Reference proteome</keyword>
<keyword id="KW-0697">Rotamase</keyword>